<evidence type="ECO:0000250" key="1">
    <source>
        <dbReference type="UniProtKB" id="Q3C258"/>
    </source>
</evidence>
<evidence type="ECO:0000255" key="2"/>
<evidence type="ECO:0000269" key="3">
    <source>
    </source>
</evidence>
<evidence type="ECO:0000303" key="4">
    <source>
    </source>
</evidence>
<evidence type="ECO:0000303" key="5">
    <source>
    </source>
</evidence>
<evidence type="ECO:0000305" key="6"/>
<evidence type="ECO:0000305" key="7">
    <source>
    </source>
</evidence>
<evidence type="ECO:0000312" key="8">
    <source>
        <dbReference type="EMBL" id="ATY39989.1"/>
    </source>
</evidence>
<comment type="function">
    <text evidence="1">Toxin that is lethal to crab. It interacts with divalent metal ions (zinc and nickel) suggesting it may function as a metal ion chelator to regulate metal ion levels or as a metal ion transporter, or that its function is modulated by metal ions. Is not active against any of the voltage-gated potassium and sodium channels tested. In addition, it does not show activity in bacterial and fungal growth inhibitory assays as well as in hemolytic assays.</text>
</comment>
<comment type="subcellular location">
    <subcellularLocation>
        <location evidence="6">Secreted</location>
    </subcellularLocation>
    <subcellularLocation>
        <location evidence="6">Nematocyst</location>
    </subcellularLocation>
</comment>
<comment type="tissue specificity">
    <text evidence="3">Expressed by acrorhagi.</text>
</comment>
<comment type="domain">
    <text evidence="1">Has the structural arrangement of two alpha-helices stabilized by disulfide bonds (CSalpha/alpha 4(S-S)).</text>
</comment>
<comment type="miscellaneous">
    <text evidence="1">This toxin interacts with divalent metal ions (zinc and nickel). This suggests it may function as a metal ion chelator to regulate metal ion levels or as a metal ion transporter, or that its function is modulated by metal ions.</text>
</comment>
<comment type="miscellaneous">
    <text evidence="1">Both Thr-23-Pro-24 and Cys-71-Pro-72 are in the trans conformation.</text>
</comment>
<comment type="similarity">
    <text evidence="6">Belongs to the Acrorhagin I family.</text>
</comment>
<reference key="1">
    <citation type="journal article" date="2005" name="Toxicon">
        <title>Novel peptide toxins from acrorhagi, aggressive organs of the sea anemone Actinia equina.</title>
        <authorList>
            <person name="Honma T."/>
            <person name="Minagawa S."/>
            <person name="Nagai H."/>
            <person name="Ishida M."/>
            <person name="Nagashima Y."/>
            <person name="Shiomi K."/>
        </authorList>
    </citation>
    <scope>NUCLEOTIDE SEQUENCE [MRNA]</scope>
    <scope>TISSUE SPECIFICITY</scope>
</reference>
<reference evidence="8" key="2">
    <citation type="submission" date="2016-11" db="EMBL/GenBank/DDBJ databases">
        <title>Toxin and toxin-like genes show dynamic gene family evolution and expression patterns in phylum Cnidaria.</title>
        <authorList>
            <person name="Surm J.M."/>
            <person name="Smith H."/>
            <person name="van der Burg C.A."/>
            <person name="Stewart Z."/>
            <person name="Prentis P.J."/>
            <person name="Pavasovic A."/>
        </authorList>
    </citation>
    <scope>NUCLEOTIDE SEQUENCE [GENOMIC DNA]</scope>
</reference>
<reference key="3">
    <citation type="journal article" date="2012" name="Toxicon">
        <title>Development of a rational nomenclature for naming peptide and protein toxins from sea anemones.</title>
        <authorList>
            <person name="Oliveira J.S."/>
            <person name="Fuentes-Silva D."/>
            <person name="King G.F."/>
        </authorList>
    </citation>
    <scope>NOMENCLATURE</scope>
</reference>
<sequence length="72" mass="8059">MNQVMTIFLVLGVIVYSVESSLTPSSDIPWEKCRHDCFAKYMSCQMSDSCHNKPSCRQCQVTYAICVSTGCP</sequence>
<feature type="signal peptide" evidence="2">
    <location>
        <begin position="1"/>
        <end position="20"/>
    </location>
</feature>
<feature type="chain" id="PRO_0000228112" description="U-actitoxin-Aeq5b" evidence="7">
    <location>
        <begin position="21"/>
        <end position="72"/>
    </location>
</feature>
<feature type="disulfide bond" evidence="1">
    <location>
        <begin position="33"/>
        <end position="71"/>
    </location>
</feature>
<feature type="disulfide bond" evidence="1">
    <location>
        <begin position="37"/>
        <end position="66"/>
    </location>
</feature>
<feature type="disulfide bond" evidence="1">
    <location>
        <begin position="44"/>
        <end position="59"/>
    </location>
</feature>
<feature type="disulfide bond" evidence="1">
    <location>
        <begin position="50"/>
        <end position="56"/>
    </location>
</feature>
<proteinExistence type="evidence at transcript level"/>
<protein>
    <recommendedName>
        <fullName evidence="5">U-actitoxin-Aeq5b</fullName>
        <shortName evidence="5">U-AITX-Aeq5b</shortName>
    </recommendedName>
    <alternativeName>
        <fullName evidence="4">Acrorhagin Ia</fullName>
    </alternativeName>
    <alternativeName>
        <fullName evidence="6">Acrorhagin-1a</fullName>
    </alternativeName>
</protein>
<keyword id="KW-1015">Disulfide bond</keyword>
<keyword id="KW-0479">Metal-binding</keyword>
<keyword id="KW-0166">Nematocyst</keyword>
<keyword id="KW-0964">Secreted</keyword>
<keyword id="KW-0732">Signal</keyword>
<keyword id="KW-0800">Toxin</keyword>
<organism>
    <name type="scientific">Actinia equina</name>
    <name type="common">Beadlet anemone</name>
    <dbReference type="NCBI Taxonomy" id="6106"/>
    <lineage>
        <taxon>Eukaryota</taxon>
        <taxon>Metazoa</taxon>
        <taxon>Cnidaria</taxon>
        <taxon>Anthozoa</taxon>
        <taxon>Hexacorallia</taxon>
        <taxon>Actiniaria</taxon>
        <taxon>Actiniidae</taxon>
        <taxon>Actinia</taxon>
    </lineage>
</organism>
<name>ACR1A_ACTEQ</name>
<dbReference type="EMBL" id="AB212067">
    <property type="protein sequence ID" value="BAE46982.1"/>
    <property type="molecule type" value="mRNA"/>
</dbReference>
<dbReference type="EMBL" id="KY176769">
    <property type="protein sequence ID" value="ATY39989.1"/>
    <property type="molecule type" value="Genomic_DNA"/>
</dbReference>
<dbReference type="SMR" id="Q3C257"/>
<dbReference type="GO" id="GO:0005576">
    <property type="term" value="C:extracellular region"/>
    <property type="evidence" value="ECO:0007669"/>
    <property type="project" value="UniProtKB-SubCell"/>
</dbReference>
<dbReference type="GO" id="GO:0042151">
    <property type="term" value="C:nematocyst"/>
    <property type="evidence" value="ECO:0007669"/>
    <property type="project" value="UniProtKB-SubCell"/>
</dbReference>
<dbReference type="GO" id="GO:0046872">
    <property type="term" value="F:metal ion binding"/>
    <property type="evidence" value="ECO:0007669"/>
    <property type="project" value="UniProtKB-KW"/>
</dbReference>
<dbReference type="GO" id="GO:0090729">
    <property type="term" value="F:toxin activity"/>
    <property type="evidence" value="ECO:0007669"/>
    <property type="project" value="UniProtKB-KW"/>
</dbReference>
<accession>Q3C257</accession>
<accession>A0A3P8MJV8</accession>